<reference key="1">
    <citation type="journal article" date="2004" name="Genome Res.">
        <title>The status, quality, and expansion of the NIH full-length cDNA project: the Mammalian Gene Collection (MGC).</title>
        <authorList>
            <consortium name="The MGC Project Team"/>
        </authorList>
    </citation>
    <scope>NUCLEOTIDE SEQUENCE [LARGE SCALE MRNA]</scope>
    <source>
        <tissue>Testis</tissue>
    </source>
</reference>
<reference key="2">
    <citation type="journal article" date="2019" name="Mol. Biol. Rep.">
        <title>Cloning of a new testis-enriched gene C4orf22 and its role in cell cycle and apoptosis in mouse spermatogenic cells.</title>
        <authorList>
            <person name="Li H."/>
            <person name="Dai Y."/>
            <person name="Luo Z."/>
            <person name="Nie D."/>
        </authorList>
    </citation>
    <scope>TISSUE SPECIFICITY</scope>
    <scope>DEVELOPMENTAL STAGE</scope>
    <scope>SUBCELLULAR LOCATION</scope>
</reference>
<proteinExistence type="evidence at transcript level"/>
<keyword id="KW-0963">Cytoplasm</keyword>
<keyword id="KW-0539">Nucleus</keyword>
<keyword id="KW-1185">Reference proteome</keyword>
<protein>
    <recommendedName>
        <fullName evidence="3">Cilia- and flagella-associated protein 299</fullName>
    </recommendedName>
</protein>
<evidence type="ECO:0000269" key="1">
    <source>
    </source>
</evidence>
<evidence type="ECO:0000303" key="2">
    <source>
    </source>
</evidence>
<evidence type="ECO:0000305" key="3"/>
<organism>
    <name type="scientific">Mus musculus</name>
    <name type="common">Mouse</name>
    <dbReference type="NCBI Taxonomy" id="10090"/>
    <lineage>
        <taxon>Eukaryota</taxon>
        <taxon>Metazoa</taxon>
        <taxon>Chordata</taxon>
        <taxon>Craniata</taxon>
        <taxon>Vertebrata</taxon>
        <taxon>Euteleostomi</taxon>
        <taxon>Mammalia</taxon>
        <taxon>Eutheria</taxon>
        <taxon>Euarchontoglires</taxon>
        <taxon>Glires</taxon>
        <taxon>Rodentia</taxon>
        <taxon>Myomorpha</taxon>
        <taxon>Muroidea</taxon>
        <taxon>Muridae</taxon>
        <taxon>Murinae</taxon>
        <taxon>Mus</taxon>
        <taxon>Mus</taxon>
    </lineage>
</organism>
<sequence>MDQDEGLTAVDNIVTQFNTYEDFLDSQITTVDLYYLEDESLARQLVELGYRGTGEIVKREDFEARKAAINIARQAERTQKKTLTSAGKELHDDFLKALAMREEDNRAGKLSTVIFIRDRNPHGQEVSGYIDYAHRLKSEDFEVYFNGKRRLLPRTTDMSFYNWDSHIAVCNSSPNYQVIADNPEGLLFKYKRDRKILNVDPKAHPGDNSTRIPIQTDLYAHVVLFDHVSRRKT</sequence>
<comment type="function">
    <text evidence="1">May be involved in spermatogenesis.</text>
</comment>
<comment type="subcellular location">
    <subcellularLocation>
        <location evidence="1">Cytoplasm</location>
    </subcellularLocation>
    <subcellularLocation>
        <location evidence="1">Nucleus</location>
    </subcellularLocation>
    <text evidence="1">Mainly cytoplasmic.</text>
</comment>
<comment type="tissue specificity">
    <text evidence="1">Abundantly expressed in testis, specifically in spermatogonia and primary spermatocytes but not in secondary spermatocytes and spermatids.</text>
</comment>
<comment type="developmental stage">
    <text evidence="1">First detected in testis in two week old mice; expression continuously increases in testis from 2 to 8 weeks after birth and remains at a constant level in 6-month-old testis.</text>
</comment>
<dbReference type="EMBL" id="BC049770">
    <property type="protein sequence ID" value="AAH49770.1"/>
    <property type="molecule type" value="mRNA"/>
</dbReference>
<dbReference type="CCDS" id="CCDS19456.1"/>
<dbReference type="RefSeq" id="NP_001019785.1">
    <property type="nucleotide sequence ID" value="NM_001024614.2"/>
</dbReference>
<dbReference type="SMR" id="Q810M1"/>
<dbReference type="FunCoup" id="Q810M1">
    <property type="interactions" value="319"/>
</dbReference>
<dbReference type="STRING" id="10090.ENSMUSP00000079208"/>
<dbReference type="PhosphoSitePlus" id="Q810M1"/>
<dbReference type="PaxDb" id="10090-ENSMUSP00000079208"/>
<dbReference type="Antibodypedia" id="51658">
    <property type="antibodies" value="105 antibodies from 15 providers"/>
</dbReference>
<dbReference type="DNASU" id="75784"/>
<dbReference type="Ensembl" id="ENSMUST00000080333.8">
    <property type="protein sequence ID" value="ENSMUSP00000079208.4"/>
    <property type="gene ID" value="ENSMUSG00000057816.8"/>
</dbReference>
<dbReference type="GeneID" id="75784"/>
<dbReference type="KEGG" id="mmu:75784"/>
<dbReference type="UCSC" id="uc008yge.1">
    <property type="organism name" value="mouse"/>
</dbReference>
<dbReference type="AGR" id="MGI:1916571"/>
<dbReference type="CTD" id="255119"/>
<dbReference type="MGI" id="MGI:1916571">
    <property type="gene designation" value="Cfap299"/>
</dbReference>
<dbReference type="VEuPathDB" id="HostDB:ENSMUSG00000057816"/>
<dbReference type="eggNOG" id="ENOG502QSP8">
    <property type="taxonomic scope" value="Eukaryota"/>
</dbReference>
<dbReference type="GeneTree" id="ENSGT00390000016547"/>
<dbReference type="HOGENOM" id="CLU_070912_0_0_1"/>
<dbReference type="InParanoid" id="Q810M1"/>
<dbReference type="OMA" id="FNNYQEY"/>
<dbReference type="OrthoDB" id="2136125at2759"/>
<dbReference type="PhylomeDB" id="Q810M1"/>
<dbReference type="TreeFam" id="TF323286"/>
<dbReference type="BioGRID-ORCS" id="75784">
    <property type="hits" value="1 hit in 76 CRISPR screens"/>
</dbReference>
<dbReference type="PRO" id="PR:Q810M1"/>
<dbReference type="Proteomes" id="UP000000589">
    <property type="component" value="Chromosome 5"/>
</dbReference>
<dbReference type="RNAct" id="Q810M1">
    <property type="molecule type" value="protein"/>
</dbReference>
<dbReference type="Bgee" id="ENSMUSG00000057816">
    <property type="expression patterns" value="Expressed in seminiferous tubule of testis and 41 other cell types or tissues"/>
</dbReference>
<dbReference type="ExpressionAtlas" id="Q810M1">
    <property type="expression patterns" value="baseline and differential"/>
</dbReference>
<dbReference type="GO" id="GO:0005737">
    <property type="term" value="C:cytoplasm"/>
    <property type="evidence" value="ECO:0000314"/>
    <property type="project" value="UniProtKB"/>
</dbReference>
<dbReference type="GO" id="GO:0005634">
    <property type="term" value="C:nucleus"/>
    <property type="evidence" value="ECO:0007669"/>
    <property type="project" value="UniProtKB-SubCell"/>
</dbReference>
<dbReference type="InterPro" id="IPR027887">
    <property type="entry name" value="DUF4464"/>
</dbReference>
<dbReference type="PANTHER" id="PTHR33588">
    <property type="entry name" value="CILIA- AND FLAGELLA-ASSOCIATED PROTEIN 299"/>
    <property type="match status" value="1"/>
</dbReference>
<dbReference type="PANTHER" id="PTHR33588:SF1">
    <property type="entry name" value="CILIA- AND FLAGELLA-ASSOCIATED PROTEIN 299"/>
    <property type="match status" value="1"/>
</dbReference>
<dbReference type="Pfam" id="PF14713">
    <property type="entry name" value="DUF4464"/>
    <property type="match status" value="1"/>
</dbReference>
<name>CF299_MOUSE</name>
<accession>Q810M1</accession>
<gene>
    <name evidence="2" type="primary">Cfap299</name>
</gene>
<feature type="chain" id="PRO_0000301956" description="Cilia- and flagella-associated protein 299">
    <location>
        <begin position="1"/>
        <end position="233"/>
    </location>
</feature>